<evidence type="ECO:0000255" key="1">
    <source>
        <dbReference type="HAMAP-Rule" id="MF_00375"/>
    </source>
</evidence>
<sequence length="427" mass="44879">MQNSRSTKLFQQALQSIPGGVNSPVRAFRSVGSDPLFIKKAAGPRIYDEDGNAFIDYVGSWGPMILGHCHPQVVSAIKAAVDNGASFGAPTELEITLAEMVIDAVPSIEMVRMVSSGTEATMSAIRLARGYTGRDNILKFSGCYHGHSDSLLVKAGSGAATFGVPDSPGVPADLAKHTLTATYNDLDSVRALVAANKGSIACIIVEPVAGNMGTVPPKEGFLEGLRSICSEEGIVLIFDEVMSGFRVAYGGVQELYGVTPDMTTLGKIIGGGLPVGAFGGKKEIMSLLSPAGGVYQAGTLSGNPLAMTAGIETLKLLKQPGFYQKLEEKSAFVAEGIAKAAKDAGFPIYSTRVGSMFCAFFSKDPVYDWDSAAKCDTKAFAAYFKAMLNEGIYLAPSQFETAFVGISHSTEDLEQTIAAAAKCFKAL</sequence>
<protein>
    <recommendedName>
        <fullName evidence="1">Glutamate-1-semialdehyde 2,1-aminomutase</fullName>
        <shortName evidence="1">GSA</shortName>
        <ecNumber evidence="1">5.4.3.8</ecNumber>
    </recommendedName>
    <alternativeName>
        <fullName evidence="1">Glutamate-1-semialdehyde aminotransferase</fullName>
        <shortName evidence="1">GSA-AT</shortName>
    </alternativeName>
</protein>
<reference key="1">
    <citation type="submission" date="2008-07" db="EMBL/GenBank/DDBJ databases">
        <title>Complete sequence of Geobacter bemidjiensis BEM.</title>
        <authorList>
            <consortium name="US DOE Joint Genome Institute"/>
            <person name="Lucas S."/>
            <person name="Copeland A."/>
            <person name="Lapidus A."/>
            <person name="Glavina del Rio T."/>
            <person name="Dalin E."/>
            <person name="Tice H."/>
            <person name="Bruce D."/>
            <person name="Goodwin L."/>
            <person name="Pitluck S."/>
            <person name="Kiss H."/>
            <person name="Brettin T."/>
            <person name="Detter J.C."/>
            <person name="Han C."/>
            <person name="Kuske C.R."/>
            <person name="Schmutz J."/>
            <person name="Larimer F."/>
            <person name="Land M."/>
            <person name="Hauser L."/>
            <person name="Kyrpides N."/>
            <person name="Lykidis A."/>
            <person name="Lovley D."/>
            <person name="Richardson P."/>
        </authorList>
    </citation>
    <scope>NUCLEOTIDE SEQUENCE [LARGE SCALE GENOMIC DNA]</scope>
    <source>
        <strain>ATCC BAA-1014 / DSM 16622 / JCM 12645 / Bem</strain>
    </source>
</reference>
<feature type="chain" id="PRO_1000121891" description="Glutamate-1-semialdehyde 2,1-aminomutase">
    <location>
        <begin position="1"/>
        <end position="427"/>
    </location>
</feature>
<feature type="modified residue" description="N6-(pyridoxal phosphate)lysine" evidence="1">
    <location>
        <position position="267"/>
    </location>
</feature>
<gene>
    <name evidence="1" type="primary">hemL</name>
    <name type="ordered locus">Gbem_3927</name>
</gene>
<comment type="catalytic activity">
    <reaction evidence="1">
        <text>(S)-4-amino-5-oxopentanoate = 5-aminolevulinate</text>
        <dbReference type="Rhea" id="RHEA:14265"/>
        <dbReference type="ChEBI" id="CHEBI:57501"/>
        <dbReference type="ChEBI" id="CHEBI:356416"/>
        <dbReference type="EC" id="5.4.3.8"/>
    </reaction>
</comment>
<comment type="cofactor">
    <cofactor evidence="1">
        <name>pyridoxal 5'-phosphate</name>
        <dbReference type="ChEBI" id="CHEBI:597326"/>
    </cofactor>
</comment>
<comment type="pathway">
    <text evidence="1">Porphyrin-containing compound metabolism; protoporphyrin-IX biosynthesis; 5-aminolevulinate from L-glutamyl-tRNA(Glu): step 2/2.</text>
</comment>
<comment type="subunit">
    <text evidence="1">Homodimer.</text>
</comment>
<comment type="subcellular location">
    <subcellularLocation>
        <location evidence="1">Cytoplasm</location>
    </subcellularLocation>
</comment>
<comment type="similarity">
    <text evidence="1">Belongs to the class-III pyridoxal-phosphate-dependent aminotransferase family. HemL subfamily.</text>
</comment>
<proteinExistence type="inferred from homology"/>
<accession>B5EFG4</accession>
<keyword id="KW-0963">Cytoplasm</keyword>
<keyword id="KW-0413">Isomerase</keyword>
<keyword id="KW-0627">Porphyrin biosynthesis</keyword>
<keyword id="KW-0663">Pyridoxal phosphate</keyword>
<keyword id="KW-1185">Reference proteome</keyword>
<dbReference type="EC" id="5.4.3.8" evidence="1"/>
<dbReference type="EMBL" id="CP001124">
    <property type="protein sequence ID" value="ACH40919.1"/>
    <property type="molecule type" value="Genomic_DNA"/>
</dbReference>
<dbReference type="RefSeq" id="WP_012532353.1">
    <property type="nucleotide sequence ID" value="NC_011146.1"/>
</dbReference>
<dbReference type="SMR" id="B5EFG4"/>
<dbReference type="STRING" id="404380.Gbem_3927"/>
<dbReference type="KEGG" id="gbm:Gbem_3927"/>
<dbReference type="eggNOG" id="COG0001">
    <property type="taxonomic scope" value="Bacteria"/>
</dbReference>
<dbReference type="HOGENOM" id="CLU_016922_1_5_7"/>
<dbReference type="OrthoDB" id="9801052at2"/>
<dbReference type="UniPathway" id="UPA00251">
    <property type="reaction ID" value="UER00317"/>
</dbReference>
<dbReference type="Proteomes" id="UP000008825">
    <property type="component" value="Chromosome"/>
</dbReference>
<dbReference type="GO" id="GO:0005737">
    <property type="term" value="C:cytoplasm"/>
    <property type="evidence" value="ECO:0007669"/>
    <property type="project" value="UniProtKB-SubCell"/>
</dbReference>
<dbReference type="GO" id="GO:0042286">
    <property type="term" value="F:glutamate-1-semialdehyde 2,1-aminomutase activity"/>
    <property type="evidence" value="ECO:0007669"/>
    <property type="project" value="UniProtKB-UniRule"/>
</dbReference>
<dbReference type="GO" id="GO:0030170">
    <property type="term" value="F:pyridoxal phosphate binding"/>
    <property type="evidence" value="ECO:0007669"/>
    <property type="project" value="InterPro"/>
</dbReference>
<dbReference type="GO" id="GO:0008483">
    <property type="term" value="F:transaminase activity"/>
    <property type="evidence" value="ECO:0007669"/>
    <property type="project" value="InterPro"/>
</dbReference>
<dbReference type="GO" id="GO:0006782">
    <property type="term" value="P:protoporphyrinogen IX biosynthetic process"/>
    <property type="evidence" value="ECO:0007669"/>
    <property type="project" value="UniProtKB-UniRule"/>
</dbReference>
<dbReference type="CDD" id="cd00610">
    <property type="entry name" value="OAT_like"/>
    <property type="match status" value="1"/>
</dbReference>
<dbReference type="FunFam" id="3.40.640.10:FF:000021">
    <property type="entry name" value="Glutamate-1-semialdehyde 2,1-aminomutase"/>
    <property type="match status" value="1"/>
</dbReference>
<dbReference type="Gene3D" id="3.90.1150.10">
    <property type="entry name" value="Aspartate Aminotransferase, domain 1"/>
    <property type="match status" value="1"/>
</dbReference>
<dbReference type="Gene3D" id="3.40.640.10">
    <property type="entry name" value="Type I PLP-dependent aspartate aminotransferase-like (Major domain)"/>
    <property type="match status" value="1"/>
</dbReference>
<dbReference type="HAMAP" id="MF_00375">
    <property type="entry name" value="HemL_aminotrans_3"/>
    <property type="match status" value="1"/>
</dbReference>
<dbReference type="InterPro" id="IPR004639">
    <property type="entry name" value="4pyrrol_synth_GluAld_NH2Trfase"/>
</dbReference>
<dbReference type="InterPro" id="IPR005814">
    <property type="entry name" value="Aminotrans_3"/>
</dbReference>
<dbReference type="InterPro" id="IPR049704">
    <property type="entry name" value="Aminotrans_3_PPA_site"/>
</dbReference>
<dbReference type="InterPro" id="IPR015424">
    <property type="entry name" value="PyrdxlP-dep_Trfase"/>
</dbReference>
<dbReference type="InterPro" id="IPR015421">
    <property type="entry name" value="PyrdxlP-dep_Trfase_major"/>
</dbReference>
<dbReference type="InterPro" id="IPR015422">
    <property type="entry name" value="PyrdxlP-dep_Trfase_small"/>
</dbReference>
<dbReference type="NCBIfam" id="TIGR00713">
    <property type="entry name" value="hemL"/>
    <property type="match status" value="1"/>
</dbReference>
<dbReference type="NCBIfam" id="NF000818">
    <property type="entry name" value="PRK00062.1"/>
    <property type="match status" value="1"/>
</dbReference>
<dbReference type="PANTHER" id="PTHR43713">
    <property type="entry name" value="GLUTAMATE-1-SEMIALDEHYDE 2,1-AMINOMUTASE"/>
    <property type="match status" value="1"/>
</dbReference>
<dbReference type="PANTHER" id="PTHR43713:SF3">
    <property type="entry name" value="GLUTAMATE-1-SEMIALDEHYDE 2,1-AMINOMUTASE 1, CHLOROPLASTIC-RELATED"/>
    <property type="match status" value="1"/>
</dbReference>
<dbReference type="Pfam" id="PF00202">
    <property type="entry name" value="Aminotran_3"/>
    <property type="match status" value="1"/>
</dbReference>
<dbReference type="SUPFAM" id="SSF53383">
    <property type="entry name" value="PLP-dependent transferases"/>
    <property type="match status" value="1"/>
</dbReference>
<dbReference type="PROSITE" id="PS00600">
    <property type="entry name" value="AA_TRANSFER_CLASS_3"/>
    <property type="match status" value="1"/>
</dbReference>
<name>GSA_CITBB</name>
<organism>
    <name type="scientific">Citrifermentans bemidjiense (strain ATCC BAA-1014 / DSM 16622 / JCM 12645 / Bem)</name>
    <name type="common">Geobacter bemidjiensis</name>
    <dbReference type="NCBI Taxonomy" id="404380"/>
    <lineage>
        <taxon>Bacteria</taxon>
        <taxon>Pseudomonadati</taxon>
        <taxon>Thermodesulfobacteriota</taxon>
        <taxon>Desulfuromonadia</taxon>
        <taxon>Geobacterales</taxon>
        <taxon>Geobacteraceae</taxon>
        <taxon>Citrifermentans</taxon>
    </lineage>
</organism>